<comment type="function">
    <text evidence="1">Interacts with outer membrane receptor proteins that carry out high-affinity binding and energy dependent uptake into the periplasmic space of specific substrates. It could act to transduce energy from the cytoplasmic membrane to specific energy-requiring processes in the outer membrane, resulting in the release into the periplasm of ligands bound by these outer membrane proteins (By similarity).</text>
</comment>
<comment type="subunit">
    <text evidence="1">Homodimer. Forms a complex with the accessory proteins ExbB and ExbD (By similarity).</text>
</comment>
<comment type="subcellular location">
    <subcellularLocation>
        <location evidence="1">Cell inner membrane</location>
        <topology evidence="1">Single-pass membrane protein</topology>
        <orientation evidence="1">Periplasmic side</orientation>
    </subcellularLocation>
</comment>
<comment type="similarity">
    <text evidence="5">Belongs to the TonB family.</text>
</comment>
<organism>
    <name type="scientific">Pseudomonas aeruginosa (strain ATCC 15692 / DSM 22644 / CIP 104116 / JCM 14847 / LMG 12228 / 1C / PRS 101 / PAO1)</name>
    <dbReference type="NCBI Taxonomy" id="208964"/>
    <lineage>
        <taxon>Bacteria</taxon>
        <taxon>Pseudomonadati</taxon>
        <taxon>Pseudomonadota</taxon>
        <taxon>Gammaproteobacteria</taxon>
        <taxon>Pseudomonadales</taxon>
        <taxon>Pseudomonadaceae</taxon>
        <taxon>Pseudomonas</taxon>
    </lineage>
</organism>
<protein>
    <recommendedName>
        <fullName>Protein TonB</fullName>
    </recommendedName>
</protein>
<evidence type="ECO:0000250" key="1"/>
<evidence type="ECO:0000255" key="2"/>
<evidence type="ECO:0000255" key="3">
    <source>
        <dbReference type="PROSITE-ProRule" id="PRU01359"/>
    </source>
</evidence>
<evidence type="ECO:0000256" key="4">
    <source>
        <dbReference type="SAM" id="MobiDB-lite"/>
    </source>
</evidence>
<evidence type="ECO:0000305" key="5"/>
<evidence type="ECO:0007829" key="6">
    <source>
        <dbReference type="PDB" id="6I97"/>
    </source>
</evidence>
<sequence>MSPQPSRSPDRFSLAALAEDHPTAPAQGDESESLPCVNAQRGEPNLRVVDCSGARRDEEVAVEEVLIPYAHGSDPEDVPGEPPKSRWWLSSGAAVAMHVAIIGALVWVMPTPAELNLGHGELPKTMQVNFVQLEKKAEPTPQPPAAAPEPTPPKIEEPKPEPPKPKPVEKPKPKPKPKPKPVENAIPKAKPKPEPKPKPEPEPSTEASSQPSPSSAAPPPAPTVGQSTPGAQTAPSGSQGPAGLPSGSLNDSDIKPLRMDPPVYPRMAQARGIEGRVKVLFTITSDGRIDDIQVLESVPSRMFDREVRQAMAKWRFEPRVSGGKIVARQATKMFFFKIEKRR</sequence>
<gene>
    <name type="primary">tonB</name>
    <name type="ordered locus">PA5531</name>
</gene>
<accession>Q51368</accession>
<proteinExistence type="evidence at protein level"/>
<name>TONB_PSEAE</name>
<feature type="chain" id="PRO_0000196207" description="Protein TonB">
    <location>
        <begin position="1"/>
        <end position="342"/>
    </location>
</feature>
<feature type="topological domain" description="Cytoplasmic" evidence="2">
    <location>
        <begin position="1"/>
        <end position="87"/>
    </location>
</feature>
<feature type="transmembrane region" description="Helical" evidence="2">
    <location>
        <begin position="88"/>
        <end position="108"/>
    </location>
</feature>
<feature type="topological domain" description="Periplasmic" evidence="2">
    <location>
        <begin position="109"/>
        <end position="342"/>
    </location>
</feature>
<feature type="repeat" description="1">
    <location>
        <begin position="157"/>
        <end position="158"/>
    </location>
</feature>
<feature type="repeat" description="2">
    <location>
        <begin position="159"/>
        <end position="160"/>
    </location>
</feature>
<feature type="repeat" description="3">
    <location>
        <begin position="161"/>
        <end position="162"/>
    </location>
</feature>
<feature type="repeat" description="4">
    <location>
        <begin position="164"/>
        <end position="165"/>
    </location>
</feature>
<feature type="repeat" description="5">
    <location>
        <begin position="166"/>
        <end position="167"/>
    </location>
</feature>
<feature type="repeat" description="6; approximate">
    <location>
        <begin position="168"/>
        <end position="169"/>
    </location>
</feature>
<feature type="repeat" description="7">
    <location>
        <begin position="170"/>
        <end position="171"/>
    </location>
</feature>
<feature type="repeat" description="8">
    <location>
        <begin position="172"/>
        <end position="173"/>
    </location>
</feature>
<feature type="repeat" description="9">
    <location>
        <begin position="174"/>
        <end position="175"/>
    </location>
</feature>
<feature type="repeat" description="10">
    <location>
        <begin position="176"/>
        <end position="177"/>
    </location>
</feature>
<feature type="repeat" description="11">
    <location>
        <begin position="178"/>
        <end position="179"/>
    </location>
</feature>
<feature type="repeat" description="12">
    <location>
        <begin position="180"/>
        <end position="181"/>
    </location>
</feature>
<feature type="repeat" description="13">
    <location>
        <begin position="190"/>
        <end position="191"/>
    </location>
</feature>
<feature type="repeat" description="14">
    <location>
        <begin position="192"/>
        <end position="193"/>
    </location>
</feature>
<feature type="repeat" description="15">
    <location>
        <begin position="194"/>
        <end position="195"/>
    </location>
</feature>
<feature type="repeat" description="16">
    <location>
        <begin position="196"/>
        <end position="197"/>
    </location>
</feature>
<feature type="repeat" description="17">
    <location>
        <begin position="198"/>
        <end position="199"/>
    </location>
</feature>
<feature type="repeat" description="18">
    <location>
        <begin position="202"/>
        <end position="203"/>
    </location>
</feature>
<feature type="domain" description="TonB C-terminal" evidence="3">
    <location>
        <begin position="249"/>
        <end position="342"/>
    </location>
</feature>
<feature type="region of interest" description="Disordered" evidence="4">
    <location>
        <begin position="1"/>
        <end position="39"/>
    </location>
</feature>
<feature type="region of interest" description="Disordered" evidence="4">
    <location>
        <begin position="136"/>
        <end position="260"/>
    </location>
</feature>
<feature type="region of interest" description="18 X 2 approximate repeats of [KE]-P">
    <location>
        <begin position="157"/>
        <end position="203"/>
    </location>
</feature>
<feature type="compositionally biased region" description="Pro residues" evidence="4">
    <location>
        <begin position="140"/>
        <end position="153"/>
    </location>
</feature>
<feature type="compositionally biased region" description="Basic and acidic residues" evidence="4">
    <location>
        <begin position="154"/>
        <end position="172"/>
    </location>
</feature>
<feature type="compositionally biased region" description="Basic and acidic residues" evidence="4">
    <location>
        <begin position="191"/>
        <end position="201"/>
    </location>
</feature>
<feature type="compositionally biased region" description="Low complexity" evidence="4">
    <location>
        <begin position="204"/>
        <end position="215"/>
    </location>
</feature>
<feature type="compositionally biased region" description="Polar residues" evidence="4">
    <location>
        <begin position="224"/>
        <end position="239"/>
    </location>
</feature>
<feature type="sequence conflict" description="In Ref. 1; AAB18654." evidence="5" ref="1">
    <original>G</original>
    <variation>R</variation>
    <location>
        <position position="272"/>
    </location>
</feature>
<feature type="strand" evidence="6">
    <location>
        <begin position="255"/>
        <end position="258"/>
    </location>
</feature>
<feature type="helix" evidence="6">
    <location>
        <begin position="266"/>
        <end position="269"/>
    </location>
</feature>
<feature type="turn" evidence="6">
    <location>
        <begin position="270"/>
        <end position="272"/>
    </location>
</feature>
<feature type="strand" evidence="6">
    <location>
        <begin position="275"/>
        <end position="283"/>
    </location>
</feature>
<feature type="strand" evidence="6">
    <location>
        <begin position="287"/>
        <end position="299"/>
    </location>
</feature>
<feature type="helix" evidence="6">
    <location>
        <begin position="304"/>
        <end position="313"/>
    </location>
</feature>
<feature type="strand" evidence="6">
    <location>
        <begin position="315"/>
        <end position="317"/>
    </location>
</feature>
<feature type="strand" evidence="6">
    <location>
        <begin position="322"/>
        <end position="326"/>
    </location>
</feature>
<feature type="strand" evidence="6">
    <location>
        <begin position="329"/>
        <end position="338"/>
    </location>
</feature>
<dbReference type="EMBL" id="U23764">
    <property type="protein sequence ID" value="AAB18654.1"/>
    <property type="molecule type" value="Genomic_DNA"/>
</dbReference>
<dbReference type="EMBL" id="AE004091">
    <property type="protein sequence ID" value="AAG08916.1"/>
    <property type="molecule type" value="Genomic_DNA"/>
</dbReference>
<dbReference type="PIR" id="E82955">
    <property type="entry name" value="E82955"/>
</dbReference>
<dbReference type="PDB" id="6FIP">
    <property type="method" value="NMR"/>
    <property type="chains" value="A=247-342"/>
</dbReference>
<dbReference type="PDB" id="6I97">
    <property type="method" value="X-ray"/>
    <property type="resolution" value="3.35 A"/>
    <property type="chains" value="D/E=251-340"/>
</dbReference>
<dbReference type="PDBsum" id="6FIP"/>
<dbReference type="PDBsum" id="6I97"/>
<dbReference type="BMRB" id="Q51368"/>
<dbReference type="SMR" id="Q51368"/>
<dbReference type="STRING" id="208964.PA5531"/>
<dbReference type="PaxDb" id="208964-PA5531"/>
<dbReference type="KEGG" id="pae:PA5531"/>
<dbReference type="PATRIC" id="fig|208964.12.peg.5796"/>
<dbReference type="PseudoCAP" id="PA5531"/>
<dbReference type="HOGENOM" id="CLU_811022_0_0_6"/>
<dbReference type="InParanoid" id="Q51368"/>
<dbReference type="OrthoDB" id="1628901at2"/>
<dbReference type="BioCyc" id="PAER208964:G1FZ6-5658-MONOMER"/>
<dbReference type="PHI-base" id="PHI:6942"/>
<dbReference type="PHI-base" id="PHI:8066"/>
<dbReference type="Proteomes" id="UP000002438">
    <property type="component" value="Chromosome"/>
</dbReference>
<dbReference type="GO" id="GO:0030288">
    <property type="term" value="C:outer membrane-bounded periplasmic space"/>
    <property type="evidence" value="ECO:0007669"/>
    <property type="project" value="InterPro"/>
</dbReference>
<dbReference type="GO" id="GO:0098797">
    <property type="term" value="C:plasma membrane protein complex"/>
    <property type="evidence" value="ECO:0000318"/>
    <property type="project" value="GO_Central"/>
</dbReference>
<dbReference type="GO" id="GO:0031992">
    <property type="term" value="F:energy transducer activity"/>
    <property type="evidence" value="ECO:0000318"/>
    <property type="project" value="GO_Central"/>
</dbReference>
<dbReference type="GO" id="GO:0071978">
    <property type="term" value="P:bacterial-type flagellum-dependent swarming motility"/>
    <property type="evidence" value="ECO:0000315"/>
    <property type="project" value="PseudoCAP"/>
</dbReference>
<dbReference type="GO" id="GO:0071236">
    <property type="term" value="P:cellular response to antibiotic"/>
    <property type="evidence" value="ECO:0000315"/>
    <property type="project" value="PseudoCAP"/>
</dbReference>
<dbReference type="GO" id="GO:0033212">
    <property type="term" value="P:iron import into cell"/>
    <property type="evidence" value="ECO:0000315"/>
    <property type="project" value="PseudoCAP"/>
</dbReference>
<dbReference type="GO" id="GO:0015031">
    <property type="term" value="P:protein transport"/>
    <property type="evidence" value="ECO:0007669"/>
    <property type="project" value="UniProtKB-KW"/>
</dbReference>
<dbReference type="GO" id="GO:0015891">
    <property type="term" value="P:siderophore transport"/>
    <property type="evidence" value="ECO:0007669"/>
    <property type="project" value="InterPro"/>
</dbReference>
<dbReference type="GO" id="GO:0044010">
    <property type="term" value="P:single-species biofilm formation"/>
    <property type="evidence" value="ECO:0000315"/>
    <property type="project" value="PseudoCAP"/>
</dbReference>
<dbReference type="GO" id="GO:0055085">
    <property type="term" value="P:transmembrane transport"/>
    <property type="evidence" value="ECO:0007669"/>
    <property type="project" value="InterPro"/>
</dbReference>
<dbReference type="GO" id="GO:0043107">
    <property type="term" value="P:type IV pilus-dependent motility"/>
    <property type="evidence" value="ECO:0000315"/>
    <property type="project" value="PseudoCAP"/>
</dbReference>
<dbReference type="Gene3D" id="3.30.2420.10">
    <property type="entry name" value="TonB"/>
    <property type="match status" value="1"/>
</dbReference>
<dbReference type="InterPro" id="IPR003538">
    <property type="entry name" value="TonB"/>
</dbReference>
<dbReference type="InterPro" id="IPR051045">
    <property type="entry name" value="TonB-dependent_transducer"/>
</dbReference>
<dbReference type="InterPro" id="IPR006260">
    <property type="entry name" value="TonB/TolA_C"/>
</dbReference>
<dbReference type="InterPro" id="IPR037682">
    <property type="entry name" value="TonB_C"/>
</dbReference>
<dbReference type="NCBIfam" id="TIGR01352">
    <property type="entry name" value="tonB_Cterm"/>
    <property type="match status" value="1"/>
</dbReference>
<dbReference type="PANTHER" id="PTHR33446:SF8">
    <property type="entry name" value="PROTEIN TONB"/>
    <property type="match status" value="1"/>
</dbReference>
<dbReference type="PANTHER" id="PTHR33446">
    <property type="entry name" value="PROTEIN TONB-RELATED"/>
    <property type="match status" value="1"/>
</dbReference>
<dbReference type="Pfam" id="PF03544">
    <property type="entry name" value="TonB_C"/>
    <property type="match status" value="1"/>
</dbReference>
<dbReference type="PRINTS" id="PR01374">
    <property type="entry name" value="TONBPROTEIN"/>
</dbReference>
<dbReference type="SUPFAM" id="SSF74653">
    <property type="entry name" value="TolA/TonB C-terminal domain"/>
    <property type="match status" value="1"/>
</dbReference>
<dbReference type="PROSITE" id="PS52015">
    <property type="entry name" value="TONB_CTD"/>
    <property type="match status" value="1"/>
</dbReference>
<reference key="1">
    <citation type="journal article" date="1996" name="Microbiology">
        <title>The Pseudomonas aeruginosa tonB gene encodes a novel TonB protein.</title>
        <authorList>
            <person name="Poole K."/>
            <person name="Zhao Q."/>
            <person name="Neshat S."/>
            <person name="Heinrichs D.E."/>
            <person name="Dean C.R."/>
        </authorList>
    </citation>
    <scope>NUCLEOTIDE SEQUENCE [GENOMIC DNA]</scope>
    <source>
        <strain>ATCC 15692 / DSM 22644 / CIP 104116 / JCM 14847 / LMG 12228 / 1C / PRS 101 / PAO1</strain>
    </source>
</reference>
<reference key="2">
    <citation type="journal article" date="2000" name="Nature">
        <title>Complete genome sequence of Pseudomonas aeruginosa PAO1, an opportunistic pathogen.</title>
        <authorList>
            <person name="Stover C.K."/>
            <person name="Pham X.-Q.T."/>
            <person name="Erwin A.L."/>
            <person name="Mizoguchi S.D."/>
            <person name="Warrener P."/>
            <person name="Hickey M.J."/>
            <person name="Brinkman F.S.L."/>
            <person name="Hufnagle W.O."/>
            <person name="Kowalik D.J."/>
            <person name="Lagrou M."/>
            <person name="Garber R.L."/>
            <person name="Goltry L."/>
            <person name="Tolentino E."/>
            <person name="Westbrock-Wadman S."/>
            <person name="Yuan Y."/>
            <person name="Brody L.L."/>
            <person name="Coulter S.N."/>
            <person name="Folger K.R."/>
            <person name="Kas A."/>
            <person name="Larbig K."/>
            <person name="Lim R.M."/>
            <person name="Smith K.A."/>
            <person name="Spencer D.H."/>
            <person name="Wong G.K.-S."/>
            <person name="Wu Z."/>
            <person name="Paulsen I.T."/>
            <person name="Reizer J."/>
            <person name="Saier M.H. Jr."/>
            <person name="Hancock R.E.W."/>
            <person name="Lory S."/>
            <person name="Olson M.V."/>
        </authorList>
    </citation>
    <scope>NUCLEOTIDE SEQUENCE [LARGE SCALE GENOMIC DNA]</scope>
    <source>
        <strain>ATCC 15692 / DSM 22644 / CIP 104116 / JCM 14847 / LMG 12228 / 1C / PRS 101 / PAO1</strain>
    </source>
</reference>
<keyword id="KW-0002">3D-structure</keyword>
<keyword id="KW-0997">Cell inner membrane</keyword>
<keyword id="KW-1003">Cell membrane</keyword>
<keyword id="KW-0472">Membrane</keyword>
<keyword id="KW-0653">Protein transport</keyword>
<keyword id="KW-1185">Reference proteome</keyword>
<keyword id="KW-0677">Repeat</keyword>
<keyword id="KW-0812">Transmembrane</keyword>
<keyword id="KW-1133">Transmembrane helix</keyword>
<keyword id="KW-0813">Transport</keyword>